<reference key="1">
    <citation type="submission" date="2004-11" db="EMBL/GenBank/DDBJ databases">
        <authorList>
            <consortium name="The German cDNA consortium"/>
        </authorList>
    </citation>
    <scope>NUCLEOTIDE SEQUENCE [LARGE SCALE MRNA]</scope>
    <source>
        <tissue>Heart</tissue>
    </source>
</reference>
<dbReference type="EMBL" id="CR858736">
    <property type="protein sequence ID" value="CAH90945.1"/>
    <property type="molecule type" value="mRNA"/>
</dbReference>
<dbReference type="RefSeq" id="NP_001125542.1">
    <property type="nucleotide sequence ID" value="NM_001132070.1"/>
</dbReference>
<dbReference type="SMR" id="Q5RBB5"/>
<dbReference type="FunCoup" id="Q5RBB5">
    <property type="interactions" value="491"/>
</dbReference>
<dbReference type="GeneID" id="100172454"/>
<dbReference type="KEGG" id="pon:100172454"/>
<dbReference type="CTD" id="79983"/>
<dbReference type="eggNOG" id="ENOG502QRUE">
    <property type="taxonomic scope" value="Eukaryota"/>
</dbReference>
<dbReference type="InParanoid" id="Q5RBB5"/>
<dbReference type="OrthoDB" id="9830956at2759"/>
<dbReference type="Proteomes" id="UP000001595">
    <property type="component" value="Unplaced"/>
</dbReference>
<dbReference type="GO" id="GO:0005884">
    <property type="term" value="C:actin filament"/>
    <property type="evidence" value="ECO:0007669"/>
    <property type="project" value="TreeGrafter"/>
</dbReference>
<dbReference type="GO" id="GO:0005912">
    <property type="term" value="C:adherens junction"/>
    <property type="evidence" value="ECO:0007669"/>
    <property type="project" value="TreeGrafter"/>
</dbReference>
<dbReference type="GO" id="GO:0005923">
    <property type="term" value="C:bicellular tight junction"/>
    <property type="evidence" value="ECO:0007669"/>
    <property type="project" value="UniProtKB-SubCell"/>
</dbReference>
<dbReference type="GO" id="GO:0051015">
    <property type="term" value="F:actin filament binding"/>
    <property type="evidence" value="ECO:0007669"/>
    <property type="project" value="TreeGrafter"/>
</dbReference>
<dbReference type="GO" id="GO:0007015">
    <property type="term" value="P:actin filament organization"/>
    <property type="evidence" value="ECO:0007669"/>
    <property type="project" value="TreeGrafter"/>
</dbReference>
<dbReference type="GO" id="GO:0070830">
    <property type="term" value="P:bicellular tight junction assembly"/>
    <property type="evidence" value="ECO:0007669"/>
    <property type="project" value="TreeGrafter"/>
</dbReference>
<dbReference type="GO" id="GO:0003382">
    <property type="term" value="P:epithelial cell morphogenesis"/>
    <property type="evidence" value="ECO:0007669"/>
    <property type="project" value="TreeGrafter"/>
</dbReference>
<dbReference type="InterPro" id="IPR026186">
    <property type="entry name" value="POF1B"/>
</dbReference>
<dbReference type="InterPro" id="IPR056240">
    <property type="entry name" value="POF1B_HlH"/>
</dbReference>
<dbReference type="PANTHER" id="PTHR22546">
    <property type="entry name" value="PREMATURE OVARIAN FAILURE, 1B"/>
    <property type="match status" value="1"/>
</dbReference>
<dbReference type="PANTHER" id="PTHR22546:SF0">
    <property type="entry name" value="PROTEIN POF1B"/>
    <property type="match status" value="1"/>
</dbReference>
<dbReference type="Pfam" id="PF24617">
    <property type="entry name" value="POF1B_HlH"/>
    <property type="match status" value="1"/>
</dbReference>
<comment type="function">
    <text evidence="1">Plays a key role in the organization of epithelial monolayers by regulating the actin cytoskeleton. May be involved in ovary development (By similarity).</text>
</comment>
<comment type="subunit">
    <text evidence="1">Interacts with nonmuscle actin.</text>
</comment>
<comment type="subcellular location">
    <subcellularLocation>
        <location evidence="1">Cell junction</location>
        <location evidence="1">Tight junction</location>
    </subcellularLocation>
</comment>
<proteinExistence type="evidence at transcript level"/>
<feature type="chain" id="PRO_0000253913" description="Protein POF1B">
    <location>
        <begin position="1"/>
        <end position="588"/>
    </location>
</feature>
<feature type="coiled-coil region" evidence="2">
    <location>
        <begin position="332"/>
        <end position="442"/>
    </location>
</feature>
<feature type="coiled-coil region" evidence="2">
    <location>
        <begin position="502"/>
        <end position="530"/>
    </location>
</feature>
<name>POF1B_PONAB</name>
<gene>
    <name type="primary">POF1B</name>
</gene>
<accession>Q5RBB5</accession>
<protein>
    <recommendedName>
        <fullName>Protein POF1B</fullName>
    </recommendedName>
</protein>
<organism>
    <name type="scientific">Pongo abelii</name>
    <name type="common">Sumatran orangutan</name>
    <name type="synonym">Pongo pygmaeus abelii</name>
    <dbReference type="NCBI Taxonomy" id="9601"/>
    <lineage>
        <taxon>Eukaryota</taxon>
        <taxon>Metazoa</taxon>
        <taxon>Chordata</taxon>
        <taxon>Craniata</taxon>
        <taxon>Vertebrata</taxon>
        <taxon>Euteleostomi</taxon>
        <taxon>Mammalia</taxon>
        <taxon>Eutheria</taxon>
        <taxon>Euarchontoglires</taxon>
        <taxon>Primates</taxon>
        <taxon>Haplorrhini</taxon>
        <taxon>Catarrhini</taxon>
        <taxon>Hominidae</taxon>
        <taxon>Pongo</taxon>
    </lineage>
</organism>
<sequence length="588" mass="67950">MSSSYWSETSSSSCGTQLPEVLQCQPQHYHCYHQSSQAQQPPEKNVVYERVRTYSGPMNKVVQALDPFNSREVLSPLKTTSSYQNLVWSDHSQELHSPTLKISTCAPSTLHITQNTEQELHSPTVKVTTYPQTTIRKYVVQNPEQEPLSQFLRGSQFFPGNNVIYEKTIRKVEKLNTDQGCHPQAQCHHHIVQQPQVIRSAHWQQPDSSQQIQAITGNDPISTHIGNELCHSGSSQIHEQVIIQDDGPEKLDPRYFGELLADLSRKNTDLYHCLLEHLQRIGGSKQDFESTDESEDIKSLIPKGLSEFTKQQIRYILQMRGMSDKSLRLVLSTFSNIREELGHLQNDLTSLENDKMRLEKDLSFKETQLKEYEELLASVRANNHQQQQGLQDSSSKCQALEENNLSLRHTLSDMEYRLKELEYCKRNLEQENQNLRMQVSETCTGPMLQAKMDEIGNHYTEMVKNLRMEEDREICRLRSQLNQYHKDVSKREGSCSDFQFKLHELTSLLEEKDSLIKRQSEELSKLRQEIYSSHNQPSTGGRTTITTKKYRTQYPILGLLYDDYEYIPPGSETQTIVIEKTEDKYTCP</sequence>
<evidence type="ECO:0000250" key="1"/>
<evidence type="ECO:0000255" key="2"/>
<keyword id="KW-0009">Actin-binding</keyword>
<keyword id="KW-0965">Cell junction</keyword>
<keyword id="KW-0175">Coiled coil</keyword>
<keyword id="KW-1185">Reference proteome</keyword>
<keyword id="KW-0796">Tight junction</keyword>